<organism>
    <name type="scientific">Caulobacter vibrioides (strain NA1000 / CB15N)</name>
    <name type="common">Caulobacter crescentus</name>
    <dbReference type="NCBI Taxonomy" id="565050"/>
    <lineage>
        <taxon>Bacteria</taxon>
        <taxon>Pseudomonadati</taxon>
        <taxon>Pseudomonadota</taxon>
        <taxon>Alphaproteobacteria</taxon>
        <taxon>Caulobacterales</taxon>
        <taxon>Caulobacteraceae</taxon>
        <taxon>Caulobacter</taxon>
    </lineage>
</organism>
<comment type="function">
    <text evidence="2">With S4 and S5 plays an important role in translational accuracy.</text>
</comment>
<comment type="function">
    <text evidence="2">Interacts with and stabilizes bases of the 16S rRNA that are involved in tRNA selection in the A site and with the mRNA backbone. Located at the interface of the 30S and 50S subunits, it traverses the body of the 30S subunit contacting proteins on the other side and probably holding the rRNA structure together. The combined cluster of proteins S8, S12 and S17 appears to hold together the shoulder and platform of the 30S subunit.</text>
</comment>
<comment type="subunit">
    <text evidence="2">Part of the 30S ribosomal subunit. Contacts proteins S8 and S17. May interact with IF1 in the 30S initiation complex.</text>
</comment>
<comment type="similarity">
    <text evidence="2">Belongs to the universal ribosomal protein uS12 family.</text>
</comment>
<evidence type="ECO:0000250" key="1"/>
<evidence type="ECO:0000255" key="2">
    <source>
        <dbReference type="HAMAP-Rule" id="MF_00403"/>
    </source>
</evidence>
<evidence type="ECO:0000305" key="3"/>
<proteinExistence type="inferred from homology"/>
<sequence length="123" mass="13825">MPTINQLIRKPRSPKPVRNKVPALKGCPQRRGVCTRVYTTTPKKPNSALRKVAKVRLTTGIEAVCYIPGEGHNLQEHSVVLIRGGRVKDLPGVRYHILRGVLDTQGVKDRKQRRSLYGAKRPK</sequence>
<keyword id="KW-0488">Methylation</keyword>
<keyword id="KW-1185">Reference proteome</keyword>
<keyword id="KW-0687">Ribonucleoprotein</keyword>
<keyword id="KW-0689">Ribosomal protein</keyword>
<keyword id="KW-0694">RNA-binding</keyword>
<keyword id="KW-0699">rRNA-binding</keyword>
<keyword id="KW-0820">tRNA-binding</keyword>
<protein>
    <recommendedName>
        <fullName evidence="2">Small ribosomal subunit protein uS12</fullName>
    </recommendedName>
    <alternativeName>
        <fullName evidence="3">30S ribosomal protein S12</fullName>
    </alternativeName>
</protein>
<name>RS12_CAUVN</name>
<accession>B8H416</accession>
<reference key="1">
    <citation type="journal article" date="2010" name="J. Bacteriol.">
        <title>The genetic basis of laboratory adaptation in Caulobacter crescentus.</title>
        <authorList>
            <person name="Marks M.E."/>
            <person name="Castro-Rojas C.M."/>
            <person name="Teiling C."/>
            <person name="Du L."/>
            <person name="Kapatral V."/>
            <person name="Walunas T.L."/>
            <person name="Crosson S."/>
        </authorList>
    </citation>
    <scope>NUCLEOTIDE SEQUENCE [LARGE SCALE GENOMIC DNA]</scope>
    <source>
        <strain>NA1000 / CB15N</strain>
    </source>
</reference>
<dbReference type="EMBL" id="CP001340">
    <property type="protein sequence ID" value="ACL96770.1"/>
    <property type="molecule type" value="Genomic_DNA"/>
</dbReference>
<dbReference type="RefSeq" id="WP_004624021.1">
    <property type="nucleotide sequence ID" value="NC_011916.1"/>
</dbReference>
<dbReference type="RefSeq" id="YP_002518678.1">
    <property type="nucleotide sequence ID" value="NC_011916.1"/>
</dbReference>
<dbReference type="SMR" id="B8H416"/>
<dbReference type="GeneID" id="7330328"/>
<dbReference type="KEGG" id="ccs:CCNA_03306"/>
<dbReference type="PATRIC" id="fig|565050.3.peg.3225"/>
<dbReference type="HOGENOM" id="CLU_104295_1_2_5"/>
<dbReference type="OrthoDB" id="9802366at2"/>
<dbReference type="PhylomeDB" id="B8H416"/>
<dbReference type="Proteomes" id="UP000001364">
    <property type="component" value="Chromosome"/>
</dbReference>
<dbReference type="GO" id="GO:0015935">
    <property type="term" value="C:small ribosomal subunit"/>
    <property type="evidence" value="ECO:0007669"/>
    <property type="project" value="InterPro"/>
</dbReference>
<dbReference type="GO" id="GO:0019843">
    <property type="term" value="F:rRNA binding"/>
    <property type="evidence" value="ECO:0007669"/>
    <property type="project" value="UniProtKB-UniRule"/>
</dbReference>
<dbReference type="GO" id="GO:0003735">
    <property type="term" value="F:structural constituent of ribosome"/>
    <property type="evidence" value="ECO:0007669"/>
    <property type="project" value="InterPro"/>
</dbReference>
<dbReference type="GO" id="GO:0000049">
    <property type="term" value="F:tRNA binding"/>
    <property type="evidence" value="ECO:0007669"/>
    <property type="project" value="UniProtKB-UniRule"/>
</dbReference>
<dbReference type="GO" id="GO:0006412">
    <property type="term" value="P:translation"/>
    <property type="evidence" value="ECO:0007669"/>
    <property type="project" value="UniProtKB-UniRule"/>
</dbReference>
<dbReference type="CDD" id="cd03368">
    <property type="entry name" value="Ribosomal_S12"/>
    <property type="match status" value="1"/>
</dbReference>
<dbReference type="FunFam" id="2.40.50.140:FF:000001">
    <property type="entry name" value="30S ribosomal protein S12"/>
    <property type="match status" value="1"/>
</dbReference>
<dbReference type="Gene3D" id="2.40.50.140">
    <property type="entry name" value="Nucleic acid-binding proteins"/>
    <property type="match status" value="1"/>
</dbReference>
<dbReference type="HAMAP" id="MF_00403_B">
    <property type="entry name" value="Ribosomal_uS12_B"/>
    <property type="match status" value="1"/>
</dbReference>
<dbReference type="InterPro" id="IPR012340">
    <property type="entry name" value="NA-bd_OB-fold"/>
</dbReference>
<dbReference type="InterPro" id="IPR006032">
    <property type="entry name" value="Ribosomal_uS12"/>
</dbReference>
<dbReference type="InterPro" id="IPR005679">
    <property type="entry name" value="Ribosomal_uS12_bac"/>
</dbReference>
<dbReference type="NCBIfam" id="TIGR00981">
    <property type="entry name" value="rpsL_bact"/>
    <property type="match status" value="1"/>
</dbReference>
<dbReference type="PANTHER" id="PTHR11652">
    <property type="entry name" value="30S RIBOSOMAL PROTEIN S12 FAMILY MEMBER"/>
    <property type="match status" value="1"/>
</dbReference>
<dbReference type="Pfam" id="PF00164">
    <property type="entry name" value="Ribosom_S12_S23"/>
    <property type="match status" value="1"/>
</dbReference>
<dbReference type="PIRSF" id="PIRSF002133">
    <property type="entry name" value="Ribosomal_S12/S23"/>
    <property type="match status" value="1"/>
</dbReference>
<dbReference type="PRINTS" id="PR01034">
    <property type="entry name" value="RIBOSOMALS12"/>
</dbReference>
<dbReference type="SUPFAM" id="SSF50249">
    <property type="entry name" value="Nucleic acid-binding proteins"/>
    <property type="match status" value="1"/>
</dbReference>
<dbReference type="PROSITE" id="PS00055">
    <property type="entry name" value="RIBOSOMAL_S12"/>
    <property type="match status" value="1"/>
</dbReference>
<gene>
    <name evidence="2" type="primary">rpsL</name>
    <name type="ordered locus">CCNA_03306</name>
</gene>
<feature type="chain" id="PRO_1000134624" description="Small ribosomal subunit protein uS12">
    <location>
        <begin position="1"/>
        <end position="123"/>
    </location>
</feature>
<feature type="modified residue" description="3-methylthioaspartic acid" evidence="1">
    <location>
        <position position="89"/>
    </location>
</feature>